<reference key="1">
    <citation type="journal article" date="2004" name="Proc. Natl. Acad. Sci. U.S.A.">
        <title>Comparison of the genome of the oral pathogen Treponema denticola with other spirochete genomes.</title>
        <authorList>
            <person name="Seshadri R."/>
            <person name="Myers G.S.A."/>
            <person name="Tettelin H."/>
            <person name="Eisen J.A."/>
            <person name="Heidelberg J.F."/>
            <person name="Dodson R.J."/>
            <person name="Davidsen T.M."/>
            <person name="DeBoy R.T."/>
            <person name="Fouts D.E."/>
            <person name="Haft D.H."/>
            <person name="Selengut J."/>
            <person name="Ren Q."/>
            <person name="Brinkac L.M."/>
            <person name="Madupu R."/>
            <person name="Kolonay J.F."/>
            <person name="Durkin S.A."/>
            <person name="Daugherty S.C."/>
            <person name="Shetty J."/>
            <person name="Shvartsbeyn A."/>
            <person name="Gebregeorgis E."/>
            <person name="Geer K."/>
            <person name="Tsegaye G."/>
            <person name="Malek J.A."/>
            <person name="Ayodeji B."/>
            <person name="Shatsman S."/>
            <person name="McLeod M.P."/>
            <person name="Smajs D."/>
            <person name="Howell J.K."/>
            <person name="Pal S."/>
            <person name="Amin A."/>
            <person name="Vashisth P."/>
            <person name="McNeill T.Z."/>
            <person name="Xiang Q."/>
            <person name="Sodergren E."/>
            <person name="Baca E."/>
            <person name="Weinstock G.M."/>
            <person name="Norris S.J."/>
            <person name="Fraser C.M."/>
            <person name="Paulsen I.T."/>
        </authorList>
    </citation>
    <scope>NUCLEOTIDE SEQUENCE [LARGE SCALE GENOMIC DNA]</scope>
    <source>
        <strain>ATCC 35405 / DSM 14222 / CIP 103919 / JCM 8153 / KCTC 15104</strain>
    </source>
</reference>
<proteinExistence type="inferred from homology"/>
<feature type="chain" id="PRO_0000228257" description="Translation initiation factor IF-2">
    <location>
        <begin position="1"/>
        <end position="896"/>
    </location>
</feature>
<feature type="domain" description="tr-type G">
    <location>
        <begin position="375"/>
        <end position="544"/>
    </location>
</feature>
<feature type="region of interest" description="Disordered" evidence="3">
    <location>
        <begin position="1"/>
        <end position="260"/>
    </location>
</feature>
<feature type="region of interest" description="G1" evidence="1">
    <location>
        <begin position="384"/>
        <end position="391"/>
    </location>
</feature>
<feature type="region of interest" description="G2" evidence="1">
    <location>
        <begin position="409"/>
        <end position="413"/>
    </location>
</feature>
<feature type="region of interest" description="G3" evidence="1">
    <location>
        <begin position="430"/>
        <end position="433"/>
    </location>
</feature>
<feature type="region of interest" description="G4" evidence="1">
    <location>
        <begin position="484"/>
        <end position="487"/>
    </location>
</feature>
<feature type="region of interest" description="G5" evidence="1">
    <location>
        <begin position="520"/>
        <end position="522"/>
    </location>
</feature>
<feature type="region of interest" description="Disordered" evidence="3">
    <location>
        <begin position="877"/>
        <end position="896"/>
    </location>
</feature>
<feature type="compositionally biased region" description="Basic and acidic residues" evidence="3">
    <location>
        <begin position="19"/>
        <end position="34"/>
    </location>
</feature>
<feature type="compositionally biased region" description="Low complexity" evidence="3">
    <location>
        <begin position="56"/>
        <end position="66"/>
    </location>
</feature>
<feature type="compositionally biased region" description="Basic and acidic residues" evidence="3">
    <location>
        <begin position="85"/>
        <end position="136"/>
    </location>
</feature>
<feature type="compositionally biased region" description="Low complexity" evidence="3">
    <location>
        <begin position="168"/>
        <end position="177"/>
    </location>
</feature>
<feature type="binding site" evidence="2">
    <location>
        <begin position="384"/>
        <end position="391"/>
    </location>
    <ligand>
        <name>GTP</name>
        <dbReference type="ChEBI" id="CHEBI:37565"/>
    </ligand>
</feature>
<feature type="binding site" evidence="2">
    <location>
        <begin position="430"/>
        <end position="434"/>
    </location>
    <ligand>
        <name>GTP</name>
        <dbReference type="ChEBI" id="CHEBI:37565"/>
    </ligand>
</feature>
<feature type="binding site" evidence="2">
    <location>
        <begin position="484"/>
        <end position="487"/>
    </location>
    <ligand>
        <name>GTP</name>
        <dbReference type="ChEBI" id="CHEBI:37565"/>
    </ligand>
</feature>
<accession>Q73NP6</accession>
<organism>
    <name type="scientific">Treponema denticola (strain ATCC 35405 / DSM 14222 / CIP 103919 / JCM 8153 / KCTC 15104)</name>
    <dbReference type="NCBI Taxonomy" id="243275"/>
    <lineage>
        <taxon>Bacteria</taxon>
        <taxon>Pseudomonadati</taxon>
        <taxon>Spirochaetota</taxon>
        <taxon>Spirochaetia</taxon>
        <taxon>Spirochaetales</taxon>
        <taxon>Treponemataceae</taxon>
        <taxon>Treponema</taxon>
    </lineage>
</organism>
<sequence length="896" mass="98141">MDIENTNKPDVILNKKSSKAADSKPESGKTDSKRKVVVKVSKTSAGKSKKPESSSEESSGGKASGKQVISVKKASSQSSKPAEASVKEKKPDERLEETKKTAPRFEDKKSDAPSAQNEKRSFDSAKKEEKQTERKKPTPSSIDSIDFASKRPNVKAGNLADSGRRNNRGQGNRPQRPGGQGQGQPGQGRRRESNFSGAQARAYSDGKKQGFRTGQGGQQGRPGDRPQNRPGFGGPRPGAAPAPIPVEKNKAQTNKKAHKAKKEIYNKKNKEEEFFEERLLNQKKKQKEKIHNIPKQIEIMESISVSELAKKMNLKASELIGKLMGMGMMVTMNQSIDADTATILASEYDCDVKIVSLYDETVIESKEDDLSELQPRPPVVTIMGHVDHGKTKTLDAIRSSNVIAGEFGGITQHIGAYTVNTHGGKITFLDTPGHEAFTMMRARGAEITDIVVLVVAADDGVMPQTIEAINHARDAKVPIIVAVNKVDKPEANVDKVKTRLSELGLMPEEWGGDTMFVEISALKKLGLDNLLDTILLQAEVLELKANYTCNAEGKVIESRIDHGRGVVATIIVQRGTLRTGDPYVAGIYSGRVRAIFNDRGEKIDEATPSMPVEILGLEGMPNAGDPFQVTDSERIARQISDKRQELKRFEDSRNVKKVTLDNLYETIHDGEILELKVIIKGDVQGSVEALKQSLEKLSTPEIRLNVIHASAGAINDSDVMLAAADSNALIIGFNVRPTPQAKLLADQEKVDIRKYTVIYKAVEEIQLAMEGMLSPDIKEQVIGMVEVRNTFKVPKIGKIAGCYVLEGVVKRNCAVHVIRDGIVVHSGKLSSLKRFKDDAKEVAAGFECGIGIEDFNDIQVDDQLEIIEMIQVARKLSDSEKYKAPEIKEEGTETDE</sequence>
<name>IF2_TREDE</name>
<evidence type="ECO:0000250" key="1"/>
<evidence type="ECO:0000255" key="2">
    <source>
        <dbReference type="HAMAP-Rule" id="MF_00100"/>
    </source>
</evidence>
<evidence type="ECO:0000256" key="3">
    <source>
        <dbReference type="SAM" id="MobiDB-lite"/>
    </source>
</evidence>
<gene>
    <name evidence="2" type="primary">infB</name>
    <name type="ordered locus">TDE_1106</name>
</gene>
<dbReference type="EMBL" id="AE017226">
    <property type="protein sequence ID" value="AAS11595.1"/>
    <property type="molecule type" value="Genomic_DNA"/>
</dbReference>
<dbReference type="RefSeq" id="NP_971714.1">
    <property type="nucleotide sequence ID" value="NC_002967.9"/>
</dbReference>
<dbReference type="RefSeq" id="WP_002682412.1">
    <property type="nucleotide sequence ID" value="NC_002967.9"/>
</dbReference>
<dbReference type="SMR" id="Q73NP6"/>
<dbReference type="STRING" id="243275.TDE_1106"/>
<dbReference type="PaxDb" id="243275-TDE_1106"/>
<dbReference type="GeneID" id="2740236"/>
<dbReference type="KEGG" id="tde:TDE_1106"/>
<dbReference type="PATRIC" id="fig|243275.7.peg.1065"/>
<dbReference type="eggNOG" id="COG0532">
    <property type="taxonomic scope" value="Bacteria"/>
</dbReference>
<dbReference type="HOGENOM" id="CLU_006301_5_1_12"/>
<dbReference type="OrthoDB" id="9811804at2"/>
<dbReference type="Proteomes" id="UP000008212">
    <property type="component" value="Chromosome"/>
</dbReference>
<dbReference type="GO" id="GO:0005829">
    <property type="term" value="C:cytosol"/>
    <property type="evidence" value="ECO:0007669"/>
    <property type="project" value="TreeGrafter"/>
</dbReference>
<dbReference type="GO" id="GO:0005525">
    <property type="term" value="F:GTP binding"/>
    <property type="evidence" value="ECO:0007669"/>
    <property type="project" value="UniProtKB-KW"/>
</dbReference>
<dbReference type="GO" id="GO:0003924">
    <property type="term" value="F:GTPase activity"/>
    <property type="evidence" value="ECO:0007669"/>
    <property type="project" value="UniProtKB-UniRule"/>
</dbReference>
<dbReference type="GO" id="GO:0003743">
    <property type="term" value="F:translation initiation factor activity"/>
    <property type="evidence" value="ECO:0007669"/>
    <property type="project" value="UniProtKB-UniRule"/>
</dbReference>
<dbReference type="CDD" id="cd01887">
    <property type="entry name" value="IF2_eIF5B"/>
    <property type="match status" value="1"/>
</dbReference>
<dbReference type="CDD" id="cd03702">
    <property type="entry name" value="IF2_mtIF2_II"/>
    <property type="match status" value="1"/>
</dbReference>
<dbReference type="CDD" id="cd03692">
    <property type="entry name" value="mtIF2_IVc"/>
    <property type="match status" value="1"/>
</dbReference>
<dbReference type="FunFam" id="2.40.30.10:FF:000007">
    <property type="entry name" value="Translation initiation factor IF-2"/>
    <property type="match status" value="1"/>
</dbReference>
<dbReference type="FunFam" id="2.40.30.10:FF:000008">
    <property type="entry name" value="Translation initiation factor IF-2"/>
    <property type="match status" value="1"/>
</dbReference>
<dbReference type="FunFam" id="3.40.50.10050:FF:000001">
    <property type="entry name" value="Translation initiation factor IF-2"/>
    <property type="match status" value="1"/>
</dbReference>
<dbReference type="FunFam" id="3.40.50.300:FF:000019">
    <property type="entry name" value="Translation initiation factor IF-2"/>
    <property type="match status" value="1"/>
</dbReference>
<dbReference type="Gene3D" id="3.40.50.300">
    <property type="entry name" value="P-loop containing nucleotide triphosphate hydrolases"/>
    <property type="match status" value="1"/>
</dbReference>
<dbReference type="Gene3D" id="2.40.30.10">
    <property type="entry name" value="Translation factors"/>
    <property type="match status" value="2"/>
</dbReference>
<dbReference type="Gene3D" id="3.40.50.10050">
    <property type="entry name" value="Translation initiation factor IF- 2, domain 3"/>
    <property type="match status" value="1"/>
</dbReference>
<dbReference type="HAMAP" id="MF_00100_B">
    <property type="entry name" value="IF_2_B"/>
    <property type="match status" value="1"/>
</dbReference>
<dbReference type="InterPro" id="IPR053905">
    <property type="entry name" value="EF-G-like_DII"/>
</dbReference>
<dbReference type="InterPro" id="IPR044145">
    <property type="entry name" value="IF2_II"/>
</dbReference>
<dbReference type="InterPro" id="IPR006847">
    <property type="entry name" value="IF2_N"/>
</dbReference>
<dbReference type="InterPro" id="IPR027417">
    <property type="entry name" value="P-loop_NTPase"/>
</dbReference>
<dbReference type="InterPro" id="IPR005225">
    <property type="entry name" value="Small_GTP-bd"/>
</dbReference>
<dbReference type="InterPro" id="IPR000795">
    <property type="entry name" value="T_Tr_GTP-bd_dom"/>
</dbReference>
<dbReference type="InterPro" id="IPR000178">
    <property type="entry name" value="TF_IF2_bacterial-like"/>
</dbReference>
<dbReference type="InterPro" id="IPR015760">
    <property type="entry name" value="TIF_IF2"/>
</dbReference>
<dbReference type="InterPro" id="IPR023115">
    <property type="entry name" value="TIF_IF2_dom3"/>
</dbReference>
<dbReference type="InterPro" id="IPR036925">
    <property type="entry name" value="TIF_IF2_dom3_sf"/>
</dbReference>
<dbReference type="InterPro" id="IPR009000">
    <property type="entry name" value="Transl_B-barrel_sf"/>
</dbReference>
<dbReference type="NCBIfam" id="TIGR00487">
    <property type="entry name" value="IF-2"/>
    <property type="match status" value="1"/>
</dbReference>
<dbReference type="NCBIfam" id="TIGR00231">
    <property type="entry name" value="small_GTP"/>
    <property type="match status" value="1"/>
</dbReference>
<dbReference type="PANTHER" id="PTHR43381:SF5">
    <property type="entry name" value="TR-TYPE G DOMAIN-CONTAINING PROTEIN"/>
    <property type="match status" value="1"/>
</dbReference>
<dbReference type="PANTHER" id="PTHR43381">
    <property type="entry name" value="TRANSLATION INITIATION FACTOR IF-2-RELATED"/>
    <property type="match status" value="1"/>
</dbReference>
<dbReference type="Pfam" id="PF22042">
    <property type="entry name" value="EF-G_D2"/>
    <property type="match status" value="1"/>
</dbReference>
<dbReference type="Pfam" id="PF00009">
    <property type="entry name" value="GTP_EFTU"/>
    <property type="match status" value="1"/>
</dbReference>
<dbReference type="Pfam" id="PF11987">
    <property type="entry name" value="IF-2"/>
    <property type="match status" value="1"/>
</dbReference>
<dbReference type="Pfam" id="PF04760">
    <property type="entry name" value="IF2_N"/>
    <property type="match status" value="1"/>
</dbReference>
<dbReference type="SUPFAM" id="SSF52156">
    <property type="entry name" value="Initiation factor IF2/eIF5b, domain 3"/>
    <property type="match status" value="1"/>
</dbReference>
<dbReference type="SUPFAM" id="SSF52540">
    <property type="entry name" value="P-loop containing nucleoside triphosphate hydrolases"/>
    <property type="match status" value="1"/>
</dbReference>
<dbReference type="SUPFAM" id="SSF50447">
    <property type="entry name" value="Translation proteins"/>
    <property type="match status" value="2"/>
</dbReference>
<dbReference type="PROSITE" id="PS51722">
    <property type="entry name" value="G_TR_2"/>
    <property type="match status" value="1"/>
</dbReference>
<dbReference type="PROSITE" id="PS01176">
    <property type="entry name" value="IF2"/>
    <property type="match status" value="1"/>
</dbReference>
<comment type="function">
    <text evidence="2">One of the essential components for the initiation of protein synthesis. Protects formylmethionyl-tRNA from spontaneous hydrolysis and promotes its binding to the 30S ribosomal subunits. Also involved in the hydrolysis of GTP during the formation of the 70S ribosomal complex.</text>
</comment>
<comment type="subcellular location">
    <subcellularLocation>
        <location evidence="2">Cytoplasm</location>
    </subcellularLocation>
</comment>
<comment type="similarity">
    <text evidence="2">Belongs to the TRAFAC class translation factor GTPase superfamily. Classic translation factor GTPase family. IF-2 subfamily.</text>
</comment>
<keyword id="KW-0963">Cytoplasm</keyword>
<keyword id="KW-0342">GTP-binding</keyword>
<keyword id="KW-0396">Initiation factor</keyword>
<keyword id="KW-0547">Nucleotide-binding</keyword>
<keyword id="KW-0648">Protein biosynthesis</keyword>
<keyword id="KW-1185">Reference proteome</keyword>
<protein>
    <recommendedName>
        <fullName evidence="2">Translation initiation factor IF-2</fullName>
    </recommendedName>
</protein>